<feature type="chain" id="PRO_0000183547" description="Cytochrome c oxidase subunit 2">
    <location>
        <begin position="1"/>
        <end position="227"/>
    </location>
</feature>
<feature type="topological domain" description="Mitochondrial intermembrane" evidence="3">
    <location>
        <begin position="1"/>
        <end position="14"/>
    </location>
</feature>
<feature type="transmembrane region" description="Helical; Name=I" evidence="3">
    <location>
        <begin position="15"/>
        <end position="45"/>
    </location>
</feature>
<feature type="topological domain" description="Mitochondrial matrix" evidence="3">
    <location>
        <begin position="46"/>
        <end position="58"/>
    </location>
</feature>
<feature type="transmembrane region" description="Helical; Name=II" evidence="3">
    <location>
        <begin position="59"/>
        <end position="86"/>
    </location>
</feature>
<feature type="topological domain" description="Mitochondrial intermembrane" evidence="3">
    <location>
        <begin position="87"/>
        <end position="227"/>
    </location>
</feature>
<feature type="binding site" evidence="3">
    <location>
        <position position="160"/>
    </location>
    <ligand>
        <name>Cu cation</name>
        <dbReference type="ChEBI" id="CHEBI:23378"/>
        <label>A1</label>
    </ligand>
</feature>
<feature type="binding site" evidence="3">
    <location>
        <position position="195"/>
    </location>
    <ligand>
        <name>Cu cation</name>
        <dbReference type="ChEBI" id="CHEBI:23378"/>
        <label>A1</label>
    </ligand>
</feature>
<feature type="binding site" evidence="3">
    <location>
        <position position="195"/>
    </location>
    <ligand>
        <name>Cu cation</name>
        <dbReference type="ChEBI" id="CHEBI:23378"/>
        <label>A2</label>
    </ligand>
</feature>
<feature type="binding site" evidence="3">
    <location>
        <position position="197"/>
    </location>
    <ligand>
        <name>Cu cation</name>
        <dbReference type="ChEBI" id="CHEBI:23378"/>
        <label>A2</label>
    </ligand>
</feature>
<feature type="binding site" evidence="3">
    <location>
        <position position="197"/>
    </location>
    <ligand>
        <name>Mg(2+)</name>
        <dbReference type="ChEBI" id="CHEBI:18420"/>
        <note>ligand shared with MT-CO1</note>
    </ligand>
</feature>
<feature type="binding site" evidence="3">
    <location>
        <position position="199"/>
    </location>
    <ligand>
        <name>Cu cation</name>
        <dbReference type="ChEBI" id="CHEBI:23378"/>
        <label>A1</label>
    </ligand>
</feature>
<feature type="binding site" evidence="3">
    <location>
        <position position="199"/>
    </location>
    <ligand>
        <name>Cu cation</name>
        <dbReference type="ChEBI" id="CHEBI:23378"/>
        <label>A2</label>
    </ligand>
</feature>
<feature type="binding site" evidence="3">
    <location>
        <position position="203"/>
    </location>
    <ligand>
        <name>Cu cation</name>
        <dbReference type="ChEBI" id="CHEBI:23378"/>
        <label>A2</label>
    </ligand>
</feature>
<feature type="binding site" evidence="3">
    <location>
        <position position="206"/>
    </location>
    <ligand>
        <name>Cu cation</name>
        <dbReference type="ChEBI" id="CHEBI:23378"/>
        <label>A1</label>
    </ligand>
</feature>
<comment type="function">
    <text evidence="2">Component of the cytochrome c oxidase, the last enzyme in the mitochondrial electron transport chain which drives oxidative phosphorylation. The respiratory chain contains 3 multisubunit complexes succinate dehydrogenase (complex II, CII), ubiquinol-cytochrome c oxidoreductase (cytochrome b-c1 complex, complex III, CIII) and cytochrome c oxidase (complex IV, CIV), that cooperate to transfer electrons derived from NADH and succinate to molecular oxygen, creating an electrochemical gradient over the inner membrane that drives transmembrane transport and the ATP synthase. Cytochrome c oxidase is the component of the respiratory chain that catalyzes the reduction of oxygen to water. Electrons originating from reduced cytochrome c in the intermembrane space (IMS) are transferred via the dinuclear copper A center (CU(A)) of subunit 2 and heme A of subunit 1 to the active site in subunit 1, a binuclear center (BNC) formed by heme A3 and copper B (CU(B)). The BNC reduces molecular oxygen to 2 water molecules using 4 electrons from cytochrome c in the IMS and 4 protons from the mitochondrial matrix.</text>
</comment>
<comment type="catalytic activity">
    <reaction evidence="2">
        <text>4 Fe(II)-[cytochrome c] + O2 + 8 H(+)(in) = 4 Fe(III)-[cytochrome c] + 2 H2O + 4 H(+)(out)</text>
        <dbReference type="Rhea" id="RHEA:11436"/>
        <dbReference type="Rhea" id="RHEA-COMP:10350"/>
        <dbReference type="Rhea" id="RHEA-COMP:14399"/>
        <dbReference type="ChEBI" id="CHEBI:15377"/>
        <dbReference type="ChEBI" id="CHEBI:15378"/>
        <dbReference type="ChEBI" id="CHEBI:15379"/>
        <dbReference type="ChEBI" id="CHEBI:29033"/>
        <dbReference type="ChEBI" id="CHEBI:29034"/>
        <dbReference type="EC" id="7.1.1.9"/>
    </reaction>
    <physiologicalReaction direction="left-to-right" evidence="2">
        <dbReference type="Rhea" id="RHEA:11437"/>
    </physiologicalReaction>
</comment>
<comment type="cofactor">
    <cofactor evidence="3">
        <name>Cu cation</name>
        <dbReference type="ChEBI" id="CHEBI:23378"/>
    </cofactor>
    <text evidence="3">Binds a dinuclear copper A center per subunit.</text>
</comment>
<comment type="subunit">
    <text evidence="1 3">Component of the cytochrome c oxidase (complex IV, CIV), a multisubunit enzyme composed of 14 subunits. The complex is composed of a catalytic core of 3 subunits MT-CO1, MT-CO2 and MT-CO3, encoded in the mitochondrial DNA, and 11 supernumerary subunits COX4I, COX5A, COX5B, COX6A, COX6B, COX6C, COX7A, COX7B, COX7C, COX8 and NDUFA4, which are encoded in the nuclear genome. The complex exists as a monomer or a dimer and forms supercomplexes (SCs) in the inner mitochondrial membrane with NADH-ubiquinone oxidoreductase (complex I, CI) and ubiquinol-cytochrome c oxidoreductase (cytochrome b-c1 complex, complex III, CIII), resulting in different assemblies (supercomplex SCI(1)III(2)IV(1) and megacomplex MCI(2)III(2)IV(2)) (By similarity). Found in a complex with TMEM177, COA6, COX18, COX20, SCO1 and SCO2. Interacts with TMEM177 in a COX20-dependent manner. Interacts with COX20. Interacts with COX16 (By similarity).</text>
</comment>
<comment type="subcellular location">
    <subcellularLocation>
        <location evidence="3">Mitochondrion inner membrane</location>
        <topology evidence="3">Multi-pass membrane protein</topology>
    </subcellularLocation>
</comment>
<comment type="similarity">
    <text evidence="4">Belongs to the cytochrome c oxidase subunit 2 family.</text>
</comment>
<dbReference type="EC" id="7.1.1.9"/>
<dbReference type="EMBL" id="X52392">
    <property type="protein sequence ID" value="CAA36628.1"/>
    <property type="molecule type" value="Genomic_DNA"/>
</dbReference>
<dbReference type="PIR" id="S10190">
    <property type="entry name" value="S10190"/>
</dbReference>
<dbReference type="RefSeq" id="NP_006918.1">
    <property type="nucleotide sequence ID" value="NC_001323.1"/>
</dbReference>
<dbReference type="SMR" id="P18944"/>
<dbReference type="FunCoup" id="P18944">
    <property type="interactions" value="124"/>
</dbReference>
<dbReference type="STRING" id="9031.ENSGALP00000058371"/>
<dbReference type="PaxDb" id="9031-ENSGALP00000034615"/>
<dbReference type="Ensembl" id="ENSGALT00010000020.1">
    <property type="protein sequence ID" value="ENSGALP00010000005.1"/>
    <property type="gene ID" value="ENSGALG00010000020.1"/>
</dbReference>
<dbReference type="VEuPathDB" id="HostDB:geneid_63549489"/>
<dbReference type="eggNOG" id="KOG4767">
    <property type="taxonomic scope" value="Eukaryota"/>
</dbReference>
<dbReference type="GeneTree" id="ENSGT00390000017410"/>
<dbReference type="HOGENOM" id="CLU_036876_2_3_1"/>
<dbReference type="InParanoid" id="P18944"/>
<dbReference type="OMA" id="WSYEYTD"/>
<dbReference type="OrthoDB" id="539285at2759"/>
<dbReference type="PhylomeDB" id="P18944"/>
<dbReference type="TreeFam" id="TF344269"/>
<dbReference type="Reactome" id="R-GGA-5628897">
    <property type="pathway name" value="TP53 Regulates Metabolic Genes"/>
</dbReference>
<dbReference type="Reactome" id="R-GGA-611105">
    <property type="pathway name" value="Respiratory electron transport"/>
</dbReference>
<dbReference type="Reactome" id="R-GGA-9707564">
    <property type="pathway name" value="Cytoprotection by HMOX1"/>
</dbReference>
<dbReference type="Reactome" id="R-GGA-9864848">
    <property type="pathway name" value="Complex IV assembly"/>
</dbReference>
<dbReference type="PRO" id="PR:P18944"/>
<dbReference type="Proteomes" id="UP000000539">
    <property type="component" value="Mitochondrion MT"/>
</dbReference>
<dbReference type="Bgee" id="ENSGALG00000032456">
    <property type="expression patterns" value="Expressed in spermatocyte and 13 other cell types or tissues"/>
</dbReference>
<dbReference type="GO" id="GO:0005743">
    <property type="term" value="C:mitochondrial inner membrane"/>
    <property type="evidence" value="ECO:0007669"/>
    <property type="project" value="UniProtKB-SubCell"/>
</dbReference>
<dbReference type="GO" id="GO:0005739">
    <property type="term" value="C:mitochondrion"/>
    <property type="evidence" value="ECO:0000314"/>
    <property type="project" value="AgBase"/>
</dbReference>
<dbReference type="GO" id="GO:0045277">
    <property type="term" value="C:respiratory chain complex IV"/>
    <property type="evidence" value="ECO:0000250"/>
    <property type="project" value="UniProtKB"/>
</dbReference>
<dbReference type="GO" id="GO:0005507">
    <property type="term" value="F:copper ion binding"/>
    <property type="evidence" value="ECO:0007669"/>
    <property type="project" value="InterPro"/>
</dbReference>
<dbReference type="GO" id="GO:0004129">
    <property type="term" value="F:cytochrome-c oxidase activity"/>
    <property type="evidence" value="ECO:0007669"/>
    <property type="project" value="UniProtKB-EC"/>
</dbReference>
<dbReference type="GO" id="GO:0042773">
    <property type="term" value="P:ATP synthesis coupled electron transport"/>
    <property type="evidence" value="ECO:0000318"/>
    <property type="project" value="GO_Central"/>
</dbReference>
<dbReference type="GO" id="GO:0022904">
    <property type="term" value="P:respiratory electron transport chain"/>
    <property type="evidence" value="ECO:0000303"/>
    <property type="project" value="AgBase"/>
</dbReference>
<dbReference type="GO" id="GO:0006979">
    <property type="term" value="P:response to oxidative stress"/>
    <property type="evidence" value="ECO:0000270"/>
    <property type="project" value="AgBase"/>
</dbReference>
<dbReference type="CDD" id="cd13912">
    <property type="entry name" value="CcO_II_C"/>
    <property type="match status" value="1"/>
</dbReference>
<dbReference type="FunFam" id="1.10.287.90:FF:000001">
    <property type="entry name" value="Cytochrome c oxidase subunit 2"/>
    <property type="match status" value="1"/>
</dbReference>
<dbReference type="FunFam" id="2.60.40.420:FF:000001">
    <property type="entry name" value="Cytochrome c oxidase subunit 2"/>
    <property type="match status" value="1"/>
</dbReference>
<dbReference type="Gene3D" id="1.10.287.90">
    <property type="match status" value="1"/>
</dbReference>
<dbReference type="Gene3D" id="2.60.40.420">
    <property type="entry name" value="Cupredoxins - blue copper proteins"/>
    <property type="match status" value="1"/>
</dbReference>
<dbReference type="InterPro" id="IPR045187">
    <property type="entry name" value="CcO_II"/>
</dbReference>
<dbReference type="InterPro" id="IPR002429">
    <property type="entry name" value="CcO_II-like_C"/>
</dbReference>
<dbReference type="InterPro" id="IPR034210">
    <property type="entry name" value="CcO_II_C"/>
</dbReference>
<dbReference type="InterPro" id="IPR001505">
    <property type="entry name" value="Copper_CuA"/>
</dbReference>
<dbReference type="InterPro" id="IPR008972">
    <property type="entry name" value="Cupredoxin"/>
</dbReference>
<dbReference type="InterPro" id="IPR014222">
    <property type="entry name" value="Cyt_c_oxidase_su2"/>
</dbReference>
<dbReference type="InterPro" id="IPR011759">
    <property type="entry name" value="Cyt_c_oxidase_su2_TM_dom"/>
</dbReference>
<dbReference type="InterPro" id="IPR036257">
    <property type="entry name" value="Cyt_c_oxidase_su2_TM_sf"/>
</dbReference>
<dbReference type="NCBIfam" id="TIGR02866">
    <property type="entry name" value="CoxB"/>
    <property type="match status" value="1"/>
</dbReference>
<dbReference type="PANTHER" id="PTHR22888:SF9">
    <property type="entry name" value="CYTOCHROME C OXIDASE SUBUNIT 2"/>
    <property type="match status" value="1"/>
</dbReference>
<dbReference type="PANTHER" id="PTHR22888">
    <property type="entry name" value="CYTOCHROME C OXIDASE, SUBUNIT II"/>
    <property type="match status" value="1"/>
</dbReference>
<dbReference type="Pfam" id="PF00116">
    <property type="entry name" value="COX2"/>
    <property type="match status" value="1"/>
</dbReference>
<dbReference type="Pfam" id="PF02790">
    <property type="entry name" value="COX2_TM"/>
    <property type="match status" value="1"/>
</dbReference>
<dbReference type="PRINTS" id="PR01166">
    <property type="entry name" value="CYCOXIDASEII"/>
</dbReference>
<dbReference type="SUPFAM" id="SSF49503">
    <property type="entry name" value="Cupredoxins"/>
    <property type="match status" value="1"/>
</dbReference>
<dbReference type="SUPFAM" id="SSF81464">
    <property type="entry name" value="Cytochrome c oxidase subunit II-like, transmembrane region"/>
    <property type="match status" value="1"/>
</dbReference>
<dbReference type="PROSITE" id="PS00078">
    <property type="entry name" value="COX2"/>
    <property type="match status" value="1"/>
</dbReference>
<dbReference type="PROSITE" id="PS50857">
    <property type="entry name" value="COX2_CUA"/>
    <property type="match status" value="1"/>
</dbReference>
<dbReference type="PROSITE" id="PS50999">
    <property type="entry name" value="COX2_TM"/>
    <property type="match status" value="1"/>
</dbReference>
<gene>
    <name type="primary">MT-CO2</name>
    <name type="synonym">COII</name>
    <name type="synonym">COXII</name>
    <name type="synonym">MTCO2</name>
</gene>
<reference key="1">
    <citation type="journal article" date="1990" name="J. Mol. Biol.">
        <title>Sequence and gene organization of the chicken mitochondrial genome. A novel gene order in higher vertebrates.</title>
        <authorList>
            <person name="Desjardins P."/>
            <person name="Morais R."/>
        </authorList>
    </citation>
    <scope>NUCLEOTIDE SEQUENCE [GENOMIC DNA]</scope>
    <source>
        <strain evidence="5">Red jungle fowl</strain>
    </source>
</reference>
<name>COX2_CHICK</name>
<proteinExistence type="inferred from homology"/>
<accession>P18944</accession>
<protein>
    <recommendedName>
        <fullName>Cytochrome c oxidase subunit 2</fullName>
        <ecNumber>7.1.1.9</ecNumber>
    </recommendedName>
    <alternativeName>
        <fullName>Cytochrome c oxidase polypeptide II</fullName>
    </alternativeName>
</protein>
<keyword id="KW-0186">Copper</keyword>
<keyword id="KW-0249">Electron transport</keyword>
<keyword id="KW-0460">Magnesium</keyword>
<keyword id="KW-0472">Membrane</keyword>
<keyword id="KW-0479">Metal-binding</keyword>
<keyword id="KW-0496">Mitochondrion</keyword>
<keyword id="KW-0999">Mitochondrion inner membrane</keyword>
<keyword id="KW-1185">Reference proteome</keyword>
<keyword id="KW-0679">Respiratory chain</keyword>
<keyword id="KW-1278">Translocase</keyword>
<keyword id="KW-0812">Transmembrane</keyword>
<keyword id="KW-1133">Transmembrane helix</keyword>
<keyword id="KW-0813">Transport</keyword>
<evidence type="ECO:0000250" key="1">
    <source>
        <dbReference type="UniProtKB" id="P00403"/>
    </source>
</evidence>
<evidence type="ECO:0000250" key="2">
    <source>
        <dbReference type="UniProtKB" id="P00410"/>
    </source>
</evidence>
<evidence type="ECO:0000250" key="3">
    <source>
        <dbReference type="UniProtKB" id="P68530"/>
    </source>
</evidence>
<evidence type="ECO:0000305" key="4"/>
<evidence type="ECO:0000312" key="5">
    <source>
        <dbReference type="Proteomes" id="UP000000539"/>
    </source>
</evidence>
<geneLocation type="mitochondrion"/>
<sequence length="227" mass="25569">MANHSQLGFQDASSPIMEELVEFHDHALMVALAICSLVLYLLTLMLMEKLSSNTVDAQEVELIWTILPAIVLVLLALPSLQILYMMDEIDEPDLTLKAIGHQWYWTYEYTDFKDLSFDSYMTPTTDLPLGHFRLLEVDHRIVIPMESPIRVIITADDVLHSWAVPALGVKTDAIPGRLNQTSFITTRPGVFYGQCSEICGANHSYMPIVVESTPLKHFEAWSSLLSS</sequence>
<organism>
    <name type="scientific">Gallus gallus</name>
    <name type="common">Chicken</name>
    <dbReference type="NCBI Taxonomy" id="9031"/>
    <lineage>
        <taxon>Eukaryota</taxon>
        <taxon>Metazoa</taxon>
        <taxon>Chordata</taxon>
        <taxon>Craniata</taxon>
        <taxon>Vertebrata</taxon>
        <taxon>Euteleostomi</taxon>
        <taxon>Archelosauria</taxon>
        <taxon>Archosauria</taxon>
        <taxon>Dinosauria</taxon>
        <taxon>Saurischia</taxon>
        <taxon>Theropoda</taxon>
        <taxon>Coelurosauria</taxon>
        <taxon>Aves</taxon>
        <taxon>Neognathae</taxon>
        <taxon>Galloanserae</taxon>
        <taxon>Galliformes</taxon>
        <taxon>Phasianidae</taxon>
        <taxon>Phasianinae</taxon>
        <taxon>Gallus</taxon>
    </lineage>
</organism>